<sequence length="113" mass="13129">MDIIKQIEQKQMRDDIPDFKTGDSVRVYVKVVEGQRERQQPFEGIVIRKKGSGLRETFTVRRTSFGVGVERTFPVHSPKLGKIEVLRRGKTRRAKLYYLRDLKGKAARVKGIR</sequence>
<dbReference type="EMBL" id="CP001034">
    <property type="protein sequence ID" value="ACB84956.1"/>
    <property type="molecule type" value="Genomic_DNA"/>
</dbReference>
<dbReference type="RefSeq" id="WP_012447831.1">
    <property type="nucleotide sequence ID" value="NC_010718.1"/>
</dbReference>
<dbReference type="SMR" id="B2A2P3"/>
<dbReference type="FunCoup" id="B2A2P3">
    <property type="interactions" value="415"/>
</dbReference>
<dbReference type="STRING" id="457570.Nther_1373"/>
<dbReference type="KEGG" id="nth:Nther_1373"/>
<dbReference type="eggNOG" id="COG0335">
    <property type="taxonomic scope" value="Bacteria"/>
</dbReference>
<dbReference type="HOGENOM" id="CLU_103507_2_1_9"/>
<dbReference type="InParanoid" id="B2A2P3"/>
<dbReference type="OrthoDB" id="9803541at2"/>
<dbReference type="Proteomes" id="UP000001683">
    <property type="component" value="Chromosome"/>
</dbReference>
<dbReference type="GO" id="GO:0022625">
    <property type="term" value="C:cytosolic large ribosomal subunit"/>
    <property type="evidence" value="ECO:0007669"/>
    <property type="project" value="TreeGrafter"/>
</dbReference>
<dbReference type="GO" id="GO:0003735">
    <property type="term" value="F:structural constituent of ribosome"/>
    <property type="evidence" value="ECO:0007669"/>
    <property type="project" value="InterPro"/>
</dbReference>
<dbReference type="GO" id="GO:0006412">
    <property type="term" value="P:translation"/>
    <property type="evidence" value="ECO:0007669"/>
    <property type="project" value="UniProtKB-UniRule"/>
</dbReference>
<dbReference type="FunFam" id="2.30.30.790:FF:000001">
    <property type="entry name" value="50S ribosomal protein L19"/>
    <property type="match status" value="1"/>
</dbReference>
<dbReference type="Gene3D" id="2.30.30.790">
    <property type="match status" value="1"/>
</dbReference>
<dbReference type="HAMAP" id="MF_00402">
    <property type="entry name" value="Ribosomal_bL19"/>
    <property type="match status" value="1"/>
</dbReference>
<dbReference type="InterPro" id="IPR001857">
    <property type="entry name" value="Ribosomal_bL19"/>
</dbReference>
<dbReference type="InterPro" id="IPR018257">
    <property type="entry name" value="Ribosomal_bL19_CS"/>
</dbReference>
<dbReference type="InterPro" id="IPR038657">
    <property type="entry name" value="Ribosomal_bL19_sf"/>
</dbReference>
<dbReference type="InterPro" id="IPR008991">
    <property type="entry name" value="Translation_prot_SH3-like_sf"/>
</dbReference>
<dbReference type="NCBIfam" id="TIGR01024">
    <property type="entry name" value="rplS_bact"/>
    <property type="match status" value="1"/>
</dbReference>
<dbReference type="PANTHER" id="PTHR15680:SF9">
    <property type="entry name" value="LARGE RIBOSOMAL SUBUNIT PROTEIN BL19M"/>
    <property type="match status" value="1"/>
</dbReference>
<dbReference type="PANTHER" id="PTHR15680">
    <property type="entry name" value="RIBOSOMAL PROTEIN L19"/>
    <property type="match status" value="1"/>
</dbReference>
<dbReference type="Pfam" id="PF01245">
    <property type="entry name" value="Ribosomal_L19"/>
    <property type="match status" value="1"/>
</dbReference>
<dbReference type="PIRSF" id="PIRSF002191">
    <property type="entry name" value="Ribosomal_L19"/>
    <property type="match status" value="1"/>
</dbReference>
<dbReference type="PRINTS" id="PR00061">
    <property type="entry name" value="RIBOSOMALL19"/>
</dbReference>
<dbReference type="SUPFAM" id="SSF50104">
    <property type="entry name" value="Translation proteins SH3-like domain"/>
    <property type="match status" value="1"/>
</dbReference>
<dbReference type="PROSITE" id="PS01015">
    <property type="entry name" value="RIBOSOMAL_L19"/>
    <property type="match status" value="1"/>
</dbReference>
<evidence type="ECO:0000255" key="1">
    <source>
        <dbReference type="HAMAP-Rule" id="MF_00402"/>
    </source>
</evidence>
<evidence type="ECO:0000305" key="2"/>
<comment type="function">
    <text evidence="1">This protein is located at the 30S-50S ribosomal subunit interface and may play a role in the structure and function of the aminoacyl-tRNA binding site.</text>
</comment>
<comment type="similarity">
    <text evidence="1">Belongs to the bacterial ribosomal protein bL19 family.</text>
</comment>
<name>RL19_NATTJ</name>
<accession>B2A2P3</accession>
<reference key="1">
    <citation type="submission" date="2008-04" db="EMBL/GenBank/DDBJ databases">
        <title>Complete sequence of chromosome of Natranaerobius thermophilus JW/NM-WN-LF.</title>
        <authorList>
            <consortium name="US DOE Joint Genome Institute"/>
            <person name="Copeland A."/>
            <person name="Lucas S."/>
            <person name="Lapidus A."/>
            <person name="Glavina del Rio T."/>
            <person name="Dalin E."/>
            <person name="Tice H."/>
            <person name="Bruce D."/>
            <person name="Goodwin L."/>
            <person name="Pitluck S."/>
            <person name="Chertkov O."/>
            <person name="Brettin T."/>
            <person name="Detter J.C."/>
            <person name="Han C."/>
            <person name="Kuske C.R."/>
            <person name="Schmutz J."/>
            <person name="Larimer F."/>
            <person name="Land M."/>
            <person name="Hauser L."/>
            <person name="Kyrpides N."/>
            <person name="Lykidis A."/>
            <person name="Mesbah N.M."/>
            <person name="Wiegel J."/>
        </authorList>
    </citation>
    <scope>NUCLEOTIDE SEQUENCE [LARGE SCALE GENOMIC DNA]</scope>
    <source>
        <strain>ATCC BAA-1301 / DSM 18059 / JW/NM-WN-LF</strain>
    </source>
</reference>
<protein>
    <recommendedName>
        <fullName evidence="1">Large ribosomal subunit protein bL19</fullName>
    </recommendedName>
    <alternativeName>
        <fullName evidence="2">50S ribosomal protein L19</fullName>
    </alternativeName>
</protein>
<proteinExistence type="inferred from homology"/>
<feature type="chain" id="PRO_1000123346" description="Large ribosomal subunit protein bL19">
    <location>
        <begin position="1"/>
        <end position="113"/>
    </location>
</feature>
<keyword id="KW-1185">Reference proteome</keyword>
<keyword id="KW-0687">Ribonucleoprotein</keyword>
<keyword id="KW-0689">Ribosomal protein</keyword>
<organism>
    <name type="scientific">Natranaerobius thermophilus (strain ATCC BAA-1301 / DSM 18059 / JW/NM-WN-LF)</name>
    <dbReference type="NCBI Taxonomy" id="457570"/>
    <lineage>
        <taxon>Bacteria</taxon>
        <taxon>Bacillati</taxon>
        <taxon>Bacillota</taxon>
        <taxon>Clostridia</taxon>
        <taxon>Natranaerobiales</taxon>
        <taxon>Natranaerobiaceae</taxon>
        <taxon>Natranaerobius</taxon>
    </lineage>
</organism>
<gene>
    <name evidence="1" type="primary">rplS</name>
    <name type="ordered locus">Nther_1373</name>
</gene>